<protein>
    <recommendedName>
        <fullName evidence="1">2,3-diketo-5-methylthiopentyl-1-phosphate enolase</fullName>
        <shortName evidence="1">DK-MTP-1-P enolase</shortName>
        <ecNumber evidence="1">5.3.2.5</ecNumber>
    </recommendedName>
    <alternativeName>
        <fullName evidence="1">RuBisCO-like protein</fullName>
        <shortName evidence="1">RLP</shortName>
    </alternativeName>
</protein>
<feature type="chain" id="PRO_0000357288" description="2,3-diketo-5-methylthiopentyl-1-phosphate enolase">
    <location>
        <begin position="1"/>
        <end position="414"/>
    </location>
</feature>
<feature type="active site" description="Proton acceptor" evidence="1">
    <location>
        <position position="99"/>
    </location>
</feature>
<feature type="binding site" evidence="1">
    <location>
        <position position="148"/>
    </location>
    <ligand>
        <name>substrate</name>
    </ligand>
</feature>
<feature type="binding site" evidence="1">
    <location>
        <begin position="174"/>
        <end position="177"/>
    </location>
    <ligand>
        <name>substrate</name>
    </ligand>
</feature>
<feature type="binding site" description="via carbamate group" evidence="1">
    <location>
        <position position="174"/>
    </location>
    <ligand>
        <name>Mg(2+)</name>
        <dbReference type="ChEBI" id="CHEBI:18420"/>
    </ligand>
</feature>
<feature type="binding site" evidence="1">
    <location>
        <position position="176"/>
    </location>
    <ligand>
        <name>Mg(2+)</name>
        <dbReference type="ChEBI" id="CHEBI:18420"/>
    </ligand>
</feature>
<feature type="binding site" evidence="1">
    <location>
        <position position="177"/>
    </location>
    <ligand>
        <name>Mg(2+)</name>
        <dbReference type="ChEBI" id="CHEBI:18420"/>
    </ligand>
</feature>
<feature type="binding site" evidence="1">
    <location>
        <position position="265"/>
    </location>
    <ligand>
        <name>substrate</name>
    </ligand>
</feature>
<feature type="binding site" evidence="1">
    <location>
        <position position="338"/>
    </location>
    <ligand>
        <name>substrate</name>
    </ligand>
</feature>
<feature type="binding site" evidence="1">
    <location>
        <begin position="360"/>
        <end position="361"/>
    </location>
    <ligand>
        <name>substrate</name>
    </ligand>
</feature>
<feature type="modified residue" description="N6-carboxylysine" evidence="1">
    <location>
        <position position="174"/>
    </location>
</feature>
<organism>
    <name type="scientific">Bacillus mycoides (strain KBAB4)</name>
    <name type="common">Bacillus weihenstephanensis</name>
    <dbReference type="NCBI Taxonomy" id="315730"/>
    <lineage>
        <taxon>Bacteria</taxon>
        <taxon>Bacillati</taxon>
        <taxon>Bacillota</taxon>
        <taxon>Bacilli</taxon>
        <taxon>Bacillales</taxon>
        <taxon>Bacillaceae</taxon>
        <taxon>Bacillus</taxon>
        <taxon>Bacillus cereus group</taxon>
    </lineage>
</organism>
<accession>A9VFD9</accession>
<keyword id="KW-0028">Amino-acid biosynthesis</keyword>
<keyword id="KW-0413">Isomerase</keyword>
<keyword id="KW-0460">Magnesium</keyword>
<keyword id="KW-0479">Metal-binding</keyword>
<keyword id="KW-0486">Methionine biosynthesis</keyword>
<reference key="1">
    <citation type="journal article" date="2008" name="Chem. Biol. Interact.">
        <title>Extending the Bacillus cereus group genomics to putative food-borne pathogens of different toxicity.</title>
        <authorList>
            <person name="Lapidus A."/>
            <person name="Goltsman E."/>
            <person name="Auger S."/>
            <person name="Galleron N."/>
            <person name="Segurens B."/>
            <person name="Dossat C."/>
            <person name="Land M.L."/>
            <person name="Broussolle V."/>
            <person name="Brillard J."/>
            <person name="Guinebretiere M.-H."/>
            <person name="Sanchis V."/>
            <person name="Nguen-the C."/>
            <person name="Lereclus D."/>
            <person name="Richardson P."/>
            <person name="Wincker P."/>
            <person name="Weissenbach J."/>
            <person name="Ehrlich S.D."/>
            <person name="Sorokin A."/>
        </authorList>
    </citation>
    <scope>NUCLEOTIDE SEQUENCE [LARGE SCALE GENOMIC DNA]</scope>
    <source>
        <strain>KBAB4</strain>
    </source>
</reference>
<sequence length="414" mass="45488">MSGIIATYLIHDDSHNLEKKAEQIAIGLTIGSWTHLPHLLQEQLKQHKGNVIHIEALDEQEHINSYLGKKVSRGLIKIHYPSLNFSPDLPAILTTTFGKLSLDGEIKLIDLTFSDELKKQFPGPKFGIEGIRNLLQVQDRPLLMSIFKGMIGRNIGYLKTQLRDQAIGGVDIVKDDEILFENSLTPLIKRIESGKEVLQSVYETYGHKTLYAVNLTGRTYDLKENAKRAVVAGADILLFNVFSYGLDVLQALVEDDEIPIPIMAHPAVSGAYSSSKLYGFSSPLLLGKLLRYAGADFSLFPSPYGNVALEKEEALLITAALTEEDHYFKKSFSVPSAGIHPGFVPFILRDFGKDVVINAGGGIHGHPNGAQGGGKAFRAAIEATLQGKPLHEVDEINLHSALQIWGNPSHEVKL</sequence>
<proteinExistence type="inferred from homology"/>
<comment type="function">
    <text evidence="1">Catalyzes the enolization of 2,3-diketo-5-methylthiopentyl-1-phosphate (DK-MTP-1-P) into 2-hydroxy-3-keto-5-methylthiopentenyl-1-phosphate (HK-MTPenyl-1-P).</text>
</comment>
<comment type="catalytic activity">
    <reaction evidence="1">
        <text>5-methylsulfanyl-2,3-dioxopentyl phosphate = 2-hydroxy-5-methylsulfanyl-3-oxopent-1-enyl phosphate</text>
        <dbReference type="Rhea" id="RHEA:18769"/>
        <dbReference type="ChEBI" id="CHEBI:58828"/>
        <dbReference type="ChEBI" id="CHEBI:59505"/>
        <dbReference type="EC" id="5.3.2.5"/>
    </reaction>
</comment>
<comment type="cofactor">
    <cofactor evidence="1">
        <name>Mg(2+)</name>
        <dbReference type="ChEBI" id="CHEBI:18420"/>
    </cofactor>
    <text evidence="1">Binds 1 Mg(2+) ion per subunit.</text>
</comment>
<comment type="pathway">
    <text evidence="1">Amino-acid biosynthesis; L-methionine biosynthesis via salvage pathway; L-methionine from S-methyl-5-thio-alpha-D-ribose 1-phosphate: step 3/6.</text>
</comment>
<comment type="subunit">
    <text evidence="1">Homodimer.</text>
</comment>
<comment type="miscellaneous">
    <text evidence="1">Has no RuBP-carboxylation activity.</text>
</comment>
<comment type="similarity">
    <text evidence="1">Belongs to the RuBisCO large chain family. Type IV subfamily.</text>
</comment>
<name>MTNW_BACMK</name>
<gene>
    <name evidence="1" type="primary">mtnW</name>
    <name type="ordered locus">BcerKBAB4_3865</name>
</gene>
<dbReference type="EC" id="5.3.2.5" evidence="1"/>
<dbReference type="EMBL" id="CP000903">
    <property type="protein sequence ID" value="ABY45033.1"/>
    <property type="molecule type" value="Genomic_DNA"/>
</dbReference>
<dbReference type="RefSeq" id="WP_002143008.1">
    <property type="nucleotide sequence ID" value="NC_010184.1"/>
</dbReference>
<dbReference type="SMR" id="A9VFD9"/>
<dbReference type="GeneID" id="66266395"/>
<dbReference type="KEGG" id="bwe:BcerKBAB4_3865"/>
<dbReference type="eggNOG" id="COG1850">
    <property type="taxonomic scope" value="Bacteria"/>
</dbReference>
<dbReference type="HOGENOM" id="CLU_031450_3_1_9"/>
<dbReference type="UniPathway" id="UPA00904">
    <property type="reaction ID" value="UER00876"/>
</dbReference>
<dbReference type="Proteomes" id="UP000002154">
    <property type="component" value="Chromosome"/>
</dbReference>
<dbReference type="GO" id="GO:0043715">
    <property type="term" value="F:2,3-diketo-5-methylthiopentyl-1-phosphate enolase activity"/>
    <property type="evidence" value="ECO:0007669"/>
    <property type="project" value="UniProtKB-UniRule"/>
</dbReference>
<dbReference type="GO" id="GO:0000287">
    <property type="term" value="F:magnesium ion binding"/>
    <property type="evidence" value="ECO:0007669"/>
    <property type="project" value="UniProtKB-UniRule"/>
</dbReference>
<dbReference type="GO" id="GO:0016984">
    <property type="term" value="F:ribulose-bisphosphate carboxylase activity"/>
    <property type="evidence" value="ECO:0007669"/>
    <property type="project" value="InterPro"/>
</dbReference>
<dbReference type="GO" id="GO:0015977">
    <property type="term" value="P:carbon fixation"/>
    <property type="evidence" value="ECO:0007669"/>
    <property type="project" value="InterPro"/>
</dbReference>
<dbReference type="GO" id="GO:0019509">
    <property type="term" value="P:L-methionine salvage from methylthioadenosine"/>
    <property type="evidence" value="ECO:0007669"/>
    <property type="project" value="UniProtKB-UniRule"/>
</dbReference>
<dbReference type="CDD" id="cd08209">
    <property type="entry name" value="RLP_DK-MTP-1-P-enolase"/>
    <property type="match status" value="1"/>
</dbReference>
<dbReference type="Gene3D" id="3.20.20.110">
    <property type="entry name" value="Ribulose bisphosphate carboxylase, large subunit, C-terminal domain"/>
    <property type="match status" value="1"/>
</dbReference>
<dbReference type="Gene3D" id="3.30.70.150">
    <property type="entry name" value="RuBisCO large subunit, N-terminal domain"/>
    <property type="match status" value="1"/>
</dbReference>
<dbReference type="HAMAP" id="MF_01679">
    <property type="entry name" value="Salvage_MtnW"/>
    <property type="match status" value="1"/>
</dbReference>
<dbReference type="InterPro" id="IPR017717">
    <property type="entry name" value="Diketo-Methiopentyl-P_enolase"/>
</dbReference>
<dbReference type="InterPro" id="IPR033966">
    <property type="entry name" value="RuBisCO"/>
</dbReference>
<dbReference type="InterPro" id="IPR000685">
    <property type="entry name" value="RuBisCO_lsu_C"/>
</dbReference>
<dbReference type="InterPro" id="IPR036376">
    <property type="entry name" value="RuBisCO_lsu_C_sf"/>
</dbReference>
<dbReference type="InterPro" id="IPR017443">
    <property type="entry name" value="RuBisCO_lsu_fd_N"/>
</dbReference>
<dbReference type="InterPro" id="IPR036422">
    <property type="entry name" value="RuBisCO_lsu_N_sf"/>
</dbReference>
<dbReference type="NCBIfam" id="NF007095">
    <property type="entry name" value="PRK09549.1"/>
    <property type="match status" value="1"/>
</dbReference>
<dbReference type="NCBIfam" id="TIGR03332">
    <property type="entry name" value="salvage_mtnW"/>
    <property type="match status" value="1"/>
</dbReference>
<dbReference type="PANTHER" id="PTHR42704">
    <property type="entry name" value="RIBULOSE BISPHOSPHATE CARBOXYLASE"/>
    <property type="match status" value="1"/>
</dbReference>
<dbReference type="PANTHER" id="PTHR42704:SF17">
    <property type="entry name" value="RIBULOSE BISPHOSPHATE CARBOXYLASE LARGE CHAIN"/>
    <property type="match status" value="1"/>
</dbReference>
<dbReference type="Pfam" id="PF00016">
    <property type="entry name" value="RuBisCO_large"/>
    <property type="match status" value="1"/>
</dbReference>
<dbReference type="Pfam" id="PF02788">
    <property type="entry name" value="RuBisCO_large_N"/>
    <property type="match status" value="1"/>
</dbReference>
<dbReference type="SFLD" id="SFLDF00157">
    <property type="entry name" value="2_3-diketo-5-methylthiopentyl"/>
    <property type="match status" value="1"/>
</dbReference>
<dbReference type="SFLD" id="SFLDG00301">
    <property type="entry name" value="RuBisCO-like_proteins"/>
    <property type="match status" value="1"/>
</dbReference>
<dbReference type="SUPFAM" id="SSF51649">
    <property type="entry name" value="RuBisCo, C-terminal domain"/>
    <property type="match status" value="1"/>
</dbReference>
<dbReference type="SUPFAM" id="SSF54966">
    <property type="entry name" value="RuBisCO, large subunit, small (N-terminal) domain"/>
    <property type="match status" value="1"/>
</dbReference>
<evidence type="ECO:0000255" key="1">
    <source>
        <dbReference type="HAMAP-Rule" id="MF_01679"/>
    </source>
</evidence>